<organism>
    <name type="scientific">Alkaliphilus metalliredigens (strain QYMF)</name>
    <dbReference type="NCBI Taxonomy" id="293826"/>
    <lineage>
        <taxon>Bacteria</taxon>
        <taxon>Bacillati</taxon>
        <taxon>Bacillota</taxon>
        <taxon>Clostridia</taxon>
        <taxon>Peptostreptococcales</taxon>
        <taxon>Natronincolaceae</taxon>
        <taxon>Alkaliphilus</taxon>
    </lineage>
</organism>
<gene>
    <name evidence="1" type="primary">rpsU</name>
    <name type="ordered locus">Amet_3042</name>
</gene>
<feature type="chain" id="PRO_1000059842" description="Small ribosomal subunit protein bS21">
    <location>
        <begin position="1"/>
        <end position="57"/>
    </location>
</feature>
<feature type="region of interest" description="Disordered" evidence="2">
    <location>
        <begin position="35"/>
        <end position="57"/>
    </location>
</feature>
<feature type="compositionally biased region" description="Basic residues" evidence="2">
    <location>
        <begin position="43"/>
        <end position="57"/>
    </location>
</feature>
<reference key="1">
    <citation type="journal article" date="2016" name="Genome Announc.">
        <title>Complete genome sequence of Alkaliphilus metalliredigens strain QYMF, an alkaliphilic and metal-reducing bacterium isolated from borax-contaminated leachate ponds.</title>
        <authorList>
            <person name="Hwang C."/>
            <person name="Copeland A."/>
            <person name="Lucas S."/>
            <person name="Lapidus A."/>
            <person name="Barry K."/>
            <person name="Detter J.C."/>
            <person name="Glavina Del Rio T."/>
            <person name="Hammon N."/>
            <person name="Israni S."/>
            <person name="Dalin E."/>
            <person name="Tice H."/>
            <person name="Pitluck S."/>
            <person name="Chertkov O."/>
            <person name="Brettin T."/>
            <person name="Bruce D."/>
            <person name="Han C."/>
            <person name="Schmutz J."/>
            <person name="Larimer F."/>
            <person name="Land M.L."/>
            <person name="Hauser L."/>
            <person name="Kyrpides N."/>
            <person name="Mikhailova N."/>
            <person name="Ye Q."/>
            <person name="Zhou J."/>
            <person name="Richardson P."/>
            <person name="Fields M.W."/>
        </authorList>
    </citation>
    <scope>NUCLEOTIDE SEQUENCE [LARGE SCALE GENOMIC DNA]</scope>
    <source>
        <strain>QYMF</strain>
    </source>
</reference>
<comment type="similarity">
    <text evidence="1">Belongs to the bacterial ribosomal protein bS21 family.</text>
</comment>
<dbReference type="EMBL" id="CP000724">
    <property type="protein sequence ID" value="ABR49182.1"/>
    <property type="molecule type" value="Genomic_DNA"/>
</dbReference>
<dbReference type="RefSeq" id="WP_012064148.1">
    <property type="nucleotide sequence ID" value="NC_009633.1"/>
</dbReference>
<dbReference type="SMR" id="A6TSL4"/>
<dbReference type="STRING" id="293826.Amet_3042"/>
<dbReference type="KEGG" id="amt:Amet_3042"/>
<dbReference type="eggNOG" id="COG0828">
    <property type="taxonomic scope" value="Bacteria"/>
</dbReference>
<dbReference type="HOGENOM" id="CLU_159258_1_2_9"/>
<dbReference type="OrthoDB" id="9799244at2"/>
<dbReference type="Proteomes" id="UP000001572">
    <property type="component" value="Chromosome"/>
</dbReference>
<dbReference type="GO" id="GO:1990904">
    <property type="term" value="C:ribonucleoprotein complex"/>
    <property type="evidence" value="ECO:0007669"/>
    <property type="project" value="UniProtKB-KW"/>
</dbReference>
<dbReference type="GO" id="GO:0005840">
    <property type="term" value="C:ribosome"/>
    <property type="evidence" value="ECO:0007669"/>
    <property type="project" value="UniProtKB-KW"/>
</dbReference>
<dbReference type="GO" id="GO:0003735">
    <property type="term" value="F:structural constituent of ribosome"/>
    <property type="evidence" value="ECO:0007669"/>
    <property type="project" value="InterPro"/>
</dbReference>
<dbReference type="GO" id="GO:0006412">
    <property type="term" value="P:translation"/>
    <property type="evidence" value="ECO:0007669"/>
    <property type="project" value="UniProtKB-UniRule"/>
</dbReference>
<dbReference type="Gene3D" id="1.20.5.1150">
    <property type="entry name" value="Ribosomal protein S8"/>
    <property type="match status" value="1"/>
</dbReference>
<dbReference type="HAMAP" id="MF_00358">
    <property type="entry name" value="Ribosomal_bS21"/>
    <property type="match status" value="1"/>
</dbReference>
<dbReference type="InterPro" id="IPR001911">
    <property type="entry name" value="Ribosomal_bS21"/>
</dbReference>
<dbReference type="InterPro" id="IPR018278">
    <property type="entry name" value="Ribosomal_bS21_CS"/>
</dbReference>
<dbReference type="InterPro" id="IPR038380">
    <property type="entry name" value="Ribosomal_bS21_sf"/>
</dbReference>
<dbReference type="NCBIfam" id="TIGR00030">
    <property type="entry name" value="S21p"/>
    <property type="match status" value="1"/>
</dbReference>
<dbReference type="PANTHER" id="PTHR21109">
    <property type="entry name" value="MITOCHONDRIAL 28S RIBOSOMAL PROTEIN S21"/>
    <property type="match status" value="1"/>
</dbReference>
<dbReference type="PANTHER" id="PTHR21109:SF22">
    <property type="entry name" value="SMALL RIBOSOMAL SUBUNIT PROTEIN BS21"/>
    <property type="match status" value="1"/>
</dbReference>
<dbReference type="Pfam" id="PF01165">
    <property type="entry name" value="Ribosomal_S21"/>
    <property type="match status" value="1"/>
</dbReference>
<dbReference type="PRINTS" id="PR00976">
    <property type="entry name" value="RIBOSOMALS21"/>
</dbReference>
<dbReference type="PROSITE" id="PS01181">
    <property type="entry name" value="RIBOSOMAL_S21"/>
    <property type="match status" value="1"/>
</dbReference>
<name>RS21_ALKMQ</name>
<proteinExistence type="inferred from homology"/>
<sequence length="57" mass="6750">MSEIKIKDNESLDNALRRFKKQCAKSGVMAEVRKREHYEKPSVKRKKKAEAARKKKF</sequence>
<keyword id="KW-1185">Reference proteome</keyword>
<keyword id="KW-0687">Ribonucleoprotein</keyword>
<keyword id="KW-0689">Ribosomal protein</keyword>
<evidence type="ECO:0000255" key="1">
    <source>
        <dbReference type="HAMAP-Rule" id="MF_00358"/>
    </source>
</evidence>
<evidence type="ECO:0000256" key="2">
    <source>
        <dbReference type="SAM" id="MobiDB-lite"/>
    </source>
</evidence>
<evidence type="ECO:0000305" key="3"/>
<protein>
    <recommendedName>
        <fullName evidence="1">Small ribosomal subunit protein bS21</fullName>
    </recommendedName>
    <alternativeName>
        <fullName evidence="3">30S ribosomal protein S21</fullName>
    </alternativeName>
</protein>
<accession>A6TSL4</accession>